<evidence type="ECO:0000255" key="1">
    <source>
        <dbReference type="HAMAP-Rule" id="MF_00365"/>
    </source>
</evidence>
<reference key="1">
    <citation type="submission" date="2007-04" db="EMBL/GenBank/DDBJ databases">
        <title>Complete sequence of chromosome of Mycobacterium gilvum PYR-GCK.</title>
        <authorList>
            <consortium name="US DOE Joint Genome Institute"/>
            <person name="Copeland A."/>
            <person name="Lucas S."/>
            <person name="Lapidus A."/>
            <person name="Barry K."/>
            <person name="Detter J.C."/>
            <person name="Glavina del Rio T."/>
            <person name="Hammon N."/>
            <person name="Israni S."/>
            <person name="Dalin E."/>
            <person name="Tice H."/>
            <person name="Pitluck S."/>
            <person name="Chain P."/>
            <person name="Malfatti S."/>
            <person name="Shin M."/>
            <person name="Vergez L."/>
            <person name="Schmutz J."/>
            <person name="Larimer F."/>
            <person name="Land M."/>
            <person name="Hauser L."/>
            <person name="Kyrpides N."/>
            <person name="Mikhailova N."/>
            <person name="Miller C."/>
            <person name="Richardson P."/>
        </authorList>
    </citation>
    <scope>NUCLEOTIDE SEQUENCE [LARGE SCALE GENOMIC DNA]</scope>
    <source>
        <strain>PYR-GCK</strain>
    </source>
</reference>
<dbReference type="EMBL" id="CP000656">
    <property type="protein sequence ID" value="ABP43308.1"/>
    <property type="molecule type" value="Genomic_DNA"/>
</dbReference>
<dbReference type="SMR" id="A4T4U1"/>
<dbReference type="STRING" id="350054.Mflv_0824"/>
<dbReference type="KEGG" id="mgi:Mflv_0824"/>
<dbReference type="eggNOG" id="COG1195">
    <property type="taxonomic scope" value="Bacteria"/>
</dbReference>
<dbReference type="HOGENOM" id="CLU_040267_1_1_11"/>
<dbReference type="OrthoDB" id="9803889at2"/>
<dbReference type="GO" id="GO:0005737">
    <property type="term" value="C:cytoplasm"/>
    <property type="evidence" value="ECO:0007669"/>
    <property type="project" value="UniProtKB-SubCell"/>
</dbReference>
<dbReference type="GO" id="GO:0005524">
    <property type="term" value="F:ATP binding"/>
    <property type="evidence" value="ECO:0007669"/>
    <property type="project" value="UniProtKB-UniRule"/>
</dbReference>
<dbReference type="GO" id="GO:0003697">
    <property type="term" value="F:single-stranded DNA binding"/>
    <property type="evidence" value="ECO:0007669"/>
    <property type="project" value="UniProtKB-UniRule"/>
</dbReference>
<dbReference type="GO" id="GO:0006260">
    <property type="term" value="P:DNA replication"/>
    <property type="evidence" value="ECO:0007669"/>
    <property type="project" value="UniProtKB-UniRule"/>
</dbReference>
<dbReference type="GO" id="GO:0000731">
    <property type="term" value="P:DNA synthesis involved in DNA repair"/>
    <property type="evidence" value="ECO:0007669"/>
    <property type="project" value="TreeGrafter"/>
</dbReference>
<dbReference type="GO" id="GO:0006302">
    <property type="term" value="P:double-strand break repair"/>
    <property type="evidence" value="ECO:0007669"/>
    <property type="project" value="TreeGrafter"/>
</dbReference>
<dbReference type="GO" id="GO:0009432">
    <property type="term" value="P:SOS response"/>
    <property type="evidence" value="ECO:0007669"/>
    <property type="project" value="UniProtKB-UniRule"/>
</dbReference>
<dbReference type="CDD" id="cd03242">
    <property type="entry name" value="ABC_RecF"/>
    <property type="match status" value="1"/>
</dbReference>
<dbReference type="Gene3D" id="3.40.50.300">
    <property type="entry name" value="P-loop containing nucleotide triphosphate hydrolases"/>
    <property type="match status" value="1"/>
</dbReference>
<dbReference type="Gene3D" id="1.20.1050.90">
    <property type="entry name" value="RecF/RecN/SMC, N-terminal domain"/>
    <property type="match status" value="1"/>
</dbReference>
<dbReference type="HAMAP" id="MF_00365">
    <property type="entry name" value="RecF"/>
    <property type="match status" value="1"/>
</dbReference>
<dbReference type="InterPro" id="IPR001238">
    <property type="entry name" value="DNA-binding_RecF"/>
</dbReference>
<dbReference type="InterPro" id="IPR018078">
    <property type="entry name" value="DNA-binding_RecF_CS"/>
</dbReference>
<dbReference type="InterPro" id="IPR027417">
    <property type="entry name" value="P-loop_NTPase"/>
</dbReference>
<dbReference type="InterPro" id="IPR003395">
    <property type="entry name" value="RecF/RecN/SMC_N"/>
</dbReference>
<dbReference type="InterPro" id="IPR042174">
    <property type="entry name" value="RecF_2"/>
</dbReference>
<dbReference type="NCBIfam" id="TIGR00611">
    <property type="entry name" value="recf"/>
    <property type="match status" value="1"/>
</dbReference>
<dbReference type="PANTHER" id="PTHR32182">
    <property type="entry name" value="DNA REPLICATION AND REPAIR PROTEIN RECF"/>
    <property type="match status" value="1"/>
</dbReference>
<dbReference type="PANTHER" id="PTHR32182:SF0">
    <property type="entry name" value="DNA REPLICATION AND REPAIR PROTEIN RECF"/>
    <property type="match status" value="1"/>
</dbReference>
<dbReference type="Pfam" id="PF02463">
    <property type="entry name" value="SMC_N"/>
    <property type="match status" value="1"/>
</dbReference>
<dbReference type="SUPFAM" id="SSF52540">
    <property type="entry name" value="P-loop containing nucleoside triphosphate hydrolases"/>
    <property type="match status" value="1"/>
</dbReference>
<dbReference type="PROSITE" id="PS00617">
    <property type="entry name" value="RECF_1"/>
    <property type="match status" value="1"/>
</dbReference>
<dbReference type="PROSITE" id="PS00618">
    <property type="entry name" value="RECF_2"/>
    <property type="match status" value="1"/>
</dbReference>
<comment type="function">
    <text evidence="1">The RecF protein is involved in DNA metabolism; it is required for DNA replication and normal SOS inducibility. RecF binds preferentially to single-stranded, linear DNA. It also seems to bind ATP.</text>
</comment>
<comment type="subcellular location">
    <subcellularLocation>
        <location evidence="1">Cytoplasm</location>
    </subcellularLocation>
</comment>
<comment type="similarity">
    <text evidence="1">Belongs to the RecF family.</text>
</comment>
<proteinExistence type="inferred from homology"/>
<keyword id="KW-0067">ATP-binding</keyword>
<keyword id="KW-0963">Cytoplasm</keyword>
<keyword id="KW-0227">DNA damage</keyword>
<keyword id="KW-0234">DNA repair</keyword>
<keyword id="KW-0235">DNA replication</keyword>
<keyword id="KW-0238">DNA-binding</keyword>
<keyword id="KW-0547">Nucleotide-binding</keyword>
<keyword id="KW-0742">SOS response</keyword>
<sequence>MYVRHLALTDFRSWSRVELELSPGRTVFVGPNGFGKTNLVEALWYSATLGSHRVASDAPLIRAGAERAVVSTIIVNEGRELAVDLDITSGRANKARLNRSPVRSAREILGVLRAVLFAPEDLALVRGDPGDRRRYLDELATTRRPRIAAVRADYDKVVRQRTALLKTASSARFRGDRGALETLDVWDGHLAAHGAQLIAARVDLVHELAPEVEKAYQLLAPASRPATVRYRSGVEVVEAEAAAGNSDPEVFEAALLDALSRRRDAELERGVCLVGPHRDDLELRLGDQPAKGFASHGESWSMALSLRLAAYELLRADGSDPVLLLDDVFAELDSARRQALAQVAASAEQVLVTAAVGEDIPVDWDARRIEIAMTDSDLGRVSVLSGVTQ</sequence>
<gene>
    <name evidence="1" type="primary">recF</name>
    <name type="ordered locus">Mflv_0824</name>
</gene>
<accession>A4T4U1</accession>
<feature type="chain" id="PRO_1000079593" description="DNA replication and repair protein RecF">
    <location>
        <begin position="1"/>
        <end position="389"/>
    </location>
</feature>
<feature type="binding site" evidence="1">
    <location>
        <begin position="30"/>
        <end position="37"/>
    </location>
    <ligand>
        <name>ATP</name>
        <dbReference type="ChEBI" id="CHEBI:30616"/>
    </ligand>
</feature>
<name>RECF_MYCGI</name>
<organism>
    <name type="scientific">Mycolicibacterium gilvum (strain PYR-GCK)</name>
    <name type="common">Mycobacterium gilvum (strain PYR-GCK)</name>
    <dbReference type="NCBI Taxonomy" id="350054"/>
    <lineage>
        <taxon>Bacteria</taxon>
        <taxon>Bacillati</taxon>
        <taxon>Actinomycetota</taxon>
        <taxon>Actinomycetes</taxon>
        <taxon>Mycobacteriales</taxon>
        <taxon>Mycobacteriaceae</taxon>
        <taxon>Mycolicibacterium</taxon>
    </lineage>
</organism>
<protein>
    <recommendedName>
        <fullName evidence="1">DNA replication and repair protein RecF</fullName>
    </recommendedName>
</protein>